<gene>
    <name evidence="1" type="primary">prpE</name>
    <name type="ordered locus">BAMEG_3373</name>
</gene>
<protein>
    <recommendedName>
        <fullName evidence="1">Bis(5'-nucleosyl)-tetraphosphatase PrpE [asymmetrical]</fullName>
        <ecNumber evidence="1">3.6.1.17</ecNumber>
    </recommendedName>
    <alternativeName>
        <fullName evidence="1">Ap4A hydrolase</fullName>
    </alternativeName>
    <alternativeName>
        <fullName evidence="1">Diadenosine 5',5'''-P1,P4-tetraphosphate asymmetrical hydrolase</fullName>
        <shortName evidence="1">Diadenosine tetraphosphatase</shortName>
    </alternativeName>
</protein>
<accession>C3LBR5</accession>
<feature type="chain" id="PRO_1000184942" description="Bis(5'-nucleosyl)-tetraphosphatase PrpE [asymmetrical]">
    <location>
        <begin position="1"/>
        <end position="246"/>
    </location>
</feature>
<name>PRPE_BACAC</name>
<sequence length="246" mass="28269">MKYDIIGDIHGCLQEFQNLTEKLGYNWSSGLPVHPDQRKLAFVGDITDRGPHSLRMIEIVWELVIHKKVAYYAPGNHCNKLYRFFLGRNVTIAHGLETTVAEYEALPSHKQNMIKEKFITLYEQSPLYHILDEKRLLVCHAGIRQDYIGRQDKKVQTFVLYGDITGEKHADGSPVRRDWAKEYKGTTWIVYGHTPVKEPRFVNHTVNIDTGAVFGGRLTALRYPEMETVSVPSSLPFVPEKFRPIS</sequence>
<organism>
    <name type="scientific">Bacillus anthracis (strain CDC 684 / NRRL 3495)</name>
    <dbReference type="NCBI Taxonomy" id="568206"/>
    <lineage>
        <taxon>Bacteria</taxon>
        <taxon>Bacillati</taxon>
        <taxon>Bacillota</taxon>
        <taxon>Bacilli</taxon>
        <taxon>Bacillales</taxon>
        <taxon>Bacillaceae</taxon>
        <taxon>Bacillus</taxon>
        <taxon>Bacillus cereus group</taxon>
    </lineage>
</organism>
<proteinExistence type="inferred from homology"/>
<comment type="function">
    <text evidence="1">Asymmetrically hydrolyzes Ap4p to yield AMP and ATP.</text>
</comment>
<comment type="catalytic activity">
    <reaction evidence="1">
        <text>P(1),P(4)-bis(5'-guanosyl) tetraphosphate + H2O = GMP + GTP + 2 H(+)</text>
        <dbReference type="Rhea" id="RHEA:22484"/>
        <dbReference type="ChEBI" id="CHEBI:15377"/>
        <dbReference type="ChEBI" id="CHEBI:15378"/>
        <dbReference type="ChEBI" id="CHEBI:37565"/>
        <dbReference type="ChEBI" id="CHEBI:57553"/>
        <dbReference type="ChEBI" id="CHEBI:58115"/>
        <dbReference type="EC" id="3.6.1.17"/>
    </reaction>
</comment>
<comment type="cofactor">
    <cofactor evidence="1">
        <name>Ni(2+)</name>
        <dbReference type="ChEBI" id="CHEBI:49786"/>
    </cofactor>
</comment>
<comment type="similarity">
    <text evidence="1">Belongs to the PrpE family.</text>
</comment>
<evidence type="ECO:0000255" key="1">
    <source>
        <dbReference type="HAMAP-Rule" id="MF_01443"/>
    </source>
</evidence>
<reference key="1">
    <citation type="submission" date="2008-10" db="EMBL/GenBank/DDBJ databases">
        <title>Genome sequence of Bacillus anthracis str. CDC 684.</title>
        <authorList>
            <person name="Dodson R.J."/>
            <person name="Munk A.C."/>
            <person name="Brettin T."/>
            <person name="Bruce D."/>
            <person name="Detter C."/>
            <person name="Tapia R."/>
            <person name="Han C."/>
            <person name="Sutton G."/>
            <person name="Sims D."/>
        </authorList>
    </citation>
    <scope>NUCLEOTIDE SEQUENCE [LARGE SCALE GENOMIC DNA]</scope>
    <source>
        <strain>CDC 684 / NRRL 3495</strain>
    </source>
</reference>
<keyword id="KW-0342">GTP-binding</keyword>
<keyword id="KW-0378">Hydrolase</keyword>
<keyword id="KW-0533">Nickel</keyword>
<keyword id="KW-0547">Nucleotide-binding</keyword>
<dbReference type="EC" id="3.6.1.17" evidence="1"/>
<dbReference type="EMBL" id="CP001215">
    <property type="protein sequence ID" value="ACP14164.1"/>
    <property type="molecule type" value="Genomic_DNA"/>
</dbReference>
<dbReference type="RefSeq" id="WP_000872719.1">
    <property type="nucleotide sequence ID" value="NC_012581.1"/>
</dbReference>
<dbReference type="SMR" id="C3LBR5"/>
<dbReference type="GeneID" id="45021219"/>
<dbReference type="KEGG" id="bah:BAMEG_3373"/>
<dbReference type="HOGENOM" id="CLU_023125_3_0_9"/>
<dbReference type="GO" id="GO:0005737">
    <property type="term" value="C:cytoplasm"/>
    <property type="evidence" value="ECO:0007669"/>
    <property type="project" value="TreeGrafter"/>
</dbReference>
<dbReference type="GO" id="GO:0004081">
    <property type="term" value="F:bis(5'-nucleosyl)-tetraphosphatase (asymmetrical) activity"/>
    <property type="evidence" value="ECO:0007669"/>
    <property type="project" value="UniProtKB-UniRule"/>
</dbReference>
<dbReference type="GO" id="GO:0005525">
    <property type="term" value="F:GTP binding"/>
    <property type="evidence" value="ECO:0007669"/>
    <property type="project" value="UniProtKB-KW"/>
</dbReference>
<dbReference type="GO" id="GO:0016151">
    <property type="term" value="F:nickel cation binding"/>
    <property type="evidence" value="ECO:0007669"/>
    <property type="project" value="UniProtKB-UniRule"/>
</dbReference>
<dbReference type="GO" id="GO:0016791">
    <property type="term" value="F:phosphatase activity"/>
    <property type="evidence" value="ECO:0007669"/>
    <property type="project" value="TreeGrafter"/>
</dbReference>
<dbReference type="CDD" id="cd07423">
    <property type="entry name" value="MPP_Prp_like"/>
    <property type="match status" value="1"/>
</dbReference>
<dbReference type="Gene3D" id="3.60.21.10">
    <property type="match status" value="1"/>
</dbReference>
<dbReference type="HAMAP" id="MF_01443">
    <property type="entry name" value="PrpE"/>
    <property type="match status" value="1"/>
</dbReference>
<dbReference type="InterPro" id="IPR050126">
    <property type="entry name" value="Ap4A_hydrolase"/>
</dbReference>
<dbReference type="InterPro" id="IPR023937">
    <property type="entry name" value="Bis(5'-nucleosyl)-tetraP_PrpE"/>
</dbReference>
<dbReference type="InterPro" id="IPR004843">
    <property type="entry name" value="Calcineurin-like_PHP_ApaH"/>
</dbReference>
<dbReference type="InterPro" id="IPR029052">
    <property type="entry name" value="Metallo-depent_PP-like"/>
</dbReference>
<dbReference type="InterPro" id="IPR041780">
    <property type="entry name" value="MPP_PrpE-like"/>
</dbReference>
<dbReference type="NCBIfam" id="NF010148">
    <property type="entry name" value="PRK13625.1"/>
    <property type="match status" value="1"/>
</dbReference>
<dbReference type="PANTHER" id="PTHR42850:SF7">
    <property type="entry name" value="BIS(5'-NUCLEOSYL)-TETRAPHOSPHATASE PRPE [ASYMMETRICAL]"/>
    <property type="match status" value="1"/>
</dbReference>
<dbReference type="PANTHER" id="PTHR42850">
    <property type="entry name" value="METALLOPHOSPHOESTERASE"/>
    <property type="match status" value="1"/>
</dbReference>
<dbReference type="Pfam" id="PF00149">
    <property type="entry name" value="Metallophos"/>
    <property type="match status" value="1"/>
</dbReference>
<dbReference type="SUPFAM" id="SSF56300">
    <property type="entry name" value="Metallo-dependent phosphatases"/>
    <property type="match status" value="1"/>
</dbReference>